<evidence type="ECO:0000250" key="1"/>
<evidence type="ECO:0000305" key="2"/>
<gene>
    <name type="primary">Nup37</name>
</gene>
<accession>Q9CWU9</accession>
<accession>Q9CZ80</accession>
<dbReference type="EMBL" id="AK010370">
    <property type="protein sequence ID" value="BAB26888.1"/>
    <property type="molecule type" value="mRNA"/>
</dbReference>
<dbReference type="EMBL" id="AK012890">
    <property type="protein sequence ID" value="BAB28538.1"/>
    <property type="molecule type" value="mRNA"/>
</dbReference>
<dbReference type="EMBL" id="AK040463">
    <property type="protein sequence ID" value="BAC30597.1"/>
    <property type="molecule type" value="mRNA"/>
</dbReference>
<dbReference type="EMBL" id="AK165537">
    <property type="protein sequence ID" value="BAE38243.1"/>
    <property type="molecule type" value="mRNA"/>
</dbReference>
<dbReference type="EMBL" id="CH466539">
    <property type="protein sequence ID" value="EDL21469.1"/>
    <property type="molecule type" value="Genomic_DNA"/>
</dbReference>
<dbReference type="EMBL" id="CH466539">
    <property type="protein sequence ID" value="EDL21470.1"/>
    <property type="molecule type" value="Genomic_DNA"/>
</dbReference>
<dbReference type="EMBL" id="CH466539">
    <property type="protein sequence ID" value="EDL21471.1"/>
    <property type="molecule type" value="Genomic_DNA"/>
</dbReference>
<dbReference type="EMBL" id="BC011102">
    <property type="protein sequence ID" value="AAH11102.1"/>
    <property type="molecule type" value="mRNA"/>
</dbReference>
<dbReference type="EMBL" id="BC032180">
    <property type="protein sequence ID" value="AAH32180.1"/>
    <property type="molecule type" value="mRNA"/>
</dbReference>
<dbReference type="CCDS" id="CCDS24107.1"/>
<dbReference type="RefSeq" id="NP_081467.2">
    <property type="nucleotide sequence ID" value="NM_027191.2"/>
</dbReference>
<dbReference type="RefSeq" id="NP_082610.1">
    <property type="nucleotide sequence ID" value="NM_028334.4"/>
</dbReference>
<dbReference type="SMR" id="Q9CWU9"/>
<dbReference type="BioGRID" id="213645">
    <property type="interactions" value="1"/>
</dbReference>
<dbReference type="ComplexPortal" id="CPX-4474">
    <property type="entry name" value="Nuclear pore complex"/>
</dbReference>
<dbReference type="FunCoup" id="Q9CWU9">
    <property type="interactions" value="2474"/>
</dbReference>
<dbReference type="STRING" id="10090.ENSMUSP00000129728"/>
<dbReference type="iPTMnet" id="Q9CWU9"/>
<dbReference type="PhosphoSitePlus" id="Q9CWU9"/>
<dbReference type="SwissPalm" id="Q9CWU9"/>
<dbReference type="PaxDb" id="10090-ENSMUSP00000129728"/>
<dbReference type="PeptideAtlas" id="Q9CWU9"/>
<dbReference type="ProteomicsDB" id="293781"/>
<dbReference type="Pumba" id="Q9CWU9"/>
<dbReference type="Antibodypedia" id="55085">
    <property type="antibodies" value="104 antibodies from 15 providers"/>
</dbReference>
<dbReference type="DNASU" id="69736"/>
<dbReference type="Ensembl" id="ENSMUST00000052355.15">
    <property type="protein sequence ID" value="ENSMUSP00000059880.8"/>
    <property type="gene ID" value="ENSMUSG00000035351.17"/>
</dbReference>
<dbReference type="Ensembl" id="ENSMUST00000169309.3">
    <property type="protein sequence ID" value="ENSMUSP00000129728.2"/>
    <property type="gene ID" value="ENSMUSG00000035351.17"/>
</dbReference>
<dbReference type="GeneID" id="69736"/>
<dbReference type="KEGG" id="mmu:69736"/>
<dbReference type="UCSC" id="uc007gre.2">
    <property type="organism name" value="mouse"/>
</dbReference>
<dbReference type="AGR" id="MGI:1919964"/>
<dbReference type="CTD" id="79023"/>
<dbReference type="MGI" id="MGI:1919964">
    <property type="gene designation" value="Nup37"/>
</dbReference>
<dbReference type="VEuPathDB" id="HostDB:ENSMUSG00000035351"/>
<dbReference type="eggNOG" id="KOG0266">
    <property type="taxonomic scope" value="Eukaryota"/>
</dbReference>
<dbReference type="GeneTree" id="ENSGT00390000010777"/>
<dbReference type="HOGENOM" id="CLU_074370_0_0_1"/>
<dbReference type="InParanoid" id="Q9CWU9"/>
<dbReference type="OMA" id="FWKVQIK"/>
<dbReference type="OrthoDB" id="340259at2759"/>
<dbReference type="PhylomeDB" id="Q9CWU9"/>
<dbReference type="TreeFam" id="TF325769"/>
<dbReference type="Reactome" id="R-MMU-141444">
    <property type="pathway name" value="Amplification of signal from unattached kinetochores via a MAD2 inhibitory signal"/>
</dbReference>
<dbReference type="Reactome" id="R-MMU-159227">
    <property type="pathway name" value="Transport of the SLBP independent Mature mRNA"/>
</dbReference>
<dbReference type="Reactome" id="R-MMU-159230">
    <property type="pathway name" value="Transport of the SLBP Dependant Mature mRNA"/>
</dbReference>
<dbReference type="Reactome" id="R-MMU-159231">
    <property type="pathway name" value="Transport of Mature mRNA Derived from an Intronless Transcript"/>
</dbReference>
<dbReference type="Reactome" id="R-MMU-159236">
    <property type="pathway name" value="Transport of Mature mRNA derived from an Intron-Containing Transcript"/>
</dbReference>
<dbReference type="Reactome" id="R-MMU-170822">
    <property type="pathway name" value="Regulation of Glucokinase by Glucokinase Regulatory Protein"/>
</dbReference>
<dbReference type="Reactome" id="R-MMU-191859">
    <property type="pathway name" value="snRNP Assembly"/>
</dbReference>
<dbReference type="Reactome" id="R-MMU-2467813">
    <property type="pathway name" value="Separation of Sister Chromatids"/>
</dbReference>
<dbReference type="Reactome" id="R-MMU-2500257">
    <property type="pathway name" value="Resolution of Sister Chromatid Cohesion"/>
</dbReference>
<dbReference type="Reactome" id="R-MMU-3108214">
    <property type="pathway name" value="SUMOylation of DNA damage response and repair proteins"/>
</dbReference>
<dbReference type="Reactome" id="R-MMU-3232142">
    <property type="pathway name" value="SUMOylation of ubiquitinylation proteins"/>
</dbReference>
<dbReference type="Reactome" id="R-MMU-3301854">
    <property type="pathway name" value="Nuclear Pore Complex (NPC) Disassembly"/>
</dbReference>
<dbReference type="Reactome" id="R-MMU-3371453">
    <property type="pathway name" value="Regulation of HSF1-mediated heat shock response"/>
</dbReference>
<dbReference type="Reactome" id="R-MMU-4085377">
    <property type="pathway name" value="SUMOylation of SUMOylation proteins"/>
</dbReference>
<dbReference type="Reactome" id="R-MMU-4551638">
    <property type="pathway name" value="SUMOylation of chromatin organization proteins"/>
</dbReference>
<dbReference type="Reactome" id="R-MMU-4570464">
    <property type="pathway name" value="SUMOylation of RNA binding proteins"/>
</dbReference>
<dbReference type="Reactome" id="R-MMU-4615885">
    <property type="pathway name" value="SUMOylation of DNA replication proteins"/>
</dbReference>
<dbReference type="Reactome" id="R-MMU-5578749">
    <property type="pathway name" value="Transcriptional regulation by small RNAs"/>
</dbReference>
<dbReference type="Reactome" id="R-MMU-5663220">
    <property type="pathway name" value="RHO GTPases Activate Formins"/>
</dbReference>
<dbReference type="Reactome" id="R-MMU-68877">
    <property type="pathway name" value="Mitotic Prometaphase"/>
</dbReference>
<dbReference type="Reactome" id="R-MMU-9615933">
    <property type="pathway name" value="Postmitotic nuclear pore complex (NPC) reformation"/>
</dbReference>
<dbReference type="Reactome" id="R-MMU-9648025">
    <property type="pathway name" value="EML4 and NUDC in mitotic spindle formation"/>
</dbReference>
<dbReference type="BioGRID-ORCS" id="69736">
    <property type="hits" value="2 hits in 77 CRISPR screens"/>
</dbReference>
<dbReference type="ChiTaRS" id="Nup37">
    <property type="organism name" value="mouse"/>
</dbReference>
<dbReference type="PRO" id="PR:Q9CWU9"/>
<dbReference type="Proteomes" id="UP000000589">
    <property type="component" value="Chromosome 10"/>
</dbReference>
<dbReference type="RNAct" id="Q9CWU9">
    <property type="molecule type" value="protein"/>
</dbReference>
<dbReference type="Bgee" id="ENSMUSG00000035351">
    <property type="expression patterns" value="Expressed in primitive streak and 250 other cell types or tissues"/>
</dbReference>
<dbReference type="ExpressionAtlas" id="Q9CWU9">
    <property type="expression patterns" value="baseline and differential"/>
</dbReference>
<dbReference type="GO" id="GO:0000776">
    <property type="term" value="C:kinetochore"/>
    <property type="evidence" value="ECO:0007669"/>
    <property type="project" value="UniProtKB-KW"/>
</dbReference>
<dbReference type="GO" id="GO:0005635">
    <property type="term" value="C:nuclear envelope"/>
    <property type="evidence" value="ECO:0000266"/>
    <property type="project" value="ComplexPortal"/>
</dbReference>
<dbReference type="GO" id="GO:0005643">
    <property type="term" value="C:nuclear pore"/>
    <property type="evidence" value="ECO:0000303"/>
    <property type="project" value="ComplexPortal"/>
</dbReference>
<dbReference type="GO" id="GO:0031080">
    <property type="term" value="C:nuclear pore outer ring"/>
    <property type="evidence" value="ECO:0007669"/>
    <property type="project" value="Ensembl"/>
</dbReference>
<dbReference type="GO" id="GO:0005654">
    <property type="term" value="C:nucleoplasm"/>
    <property type="evidence" value="ECO:0007669"/>
    <property type="project" value="Ensembl"/>
</dbReference>
<dbReference type="GO" id="GO:0051301">
    <property type="term" value="P:cell division"/>
    <property type="evidence" value="ECO:0007669"/>
    <property type="project" value="UniProtKB-KW"/>
</dbReference>
<dbReference type="GO" id="GO:0007059">
    <property type="term" value="P:chromosome segregation"/>
    <property type="evidence" value="ECO:0007669"/>
    <property type="project" value="UniProtKB-KW"/>
</dbReference>
<dbReference type="GO" id="GO:0051028">
    <property type="term" value="P:mRNA transport"/>
    <property type="evidence" value="ECO:0007669"/>
    <property type="project" value="UniProtKB-KW"/>
</dbReference>
<dbReference type="GO" id="GO:0006913">
    <property type="term" value="P:nucleocytoplasmic transport"/>
    <property type="evidence" value="ECO:0000303"/>
    <property type="project" value="ComplexPortal"/>
</dbReference>
<dbReference type="GO" id="GO:0015031">
    <property type="term" value="P:protein transport"/>
    <property type="evidence" value="ECO:0007669"/>
    <property type="project" value="UniProtKB-KW"/>
</dbReference>
<dbReference type="FunFam" id="2.130.10.10:FF:000168">
    <property type="entry name" value="Nucleoporin Nup37"/>
    <property type="match status" value="1"/>
</dbReference>
<dbReference type="Gene3D" id="2.130.10.10">
    <property type="entry name" value="YVTN repeat-like/Quinoprotein amine dehydrogenase"/>
    <property type="match status" value="1"/>
</dbReference>
<dbReference type="InterPro" id="IPR037626">
    <property type="entry name" value="NUP37"/>
</dbReference>
<dbReference type="InterPro" id="IPR015943">
    <property type="entry name" value="WD40/YVTN_repeat-like_dom_sf"/>
</dbReference>
<dbReference type="InterPro" id="IPR019775">
    <property type="entry name" value="WD40_repeat_CS"/>
</dbReference>
<dbReference type="InterPro" id="IPR036322">
    <property type="entry name" value="WD40_repeat_dom_sf"/>
</dbReference>
<dbReference type="InterPro" id="IPR001680">
    <property type="entry name" value="WD40_rpt"/>
</dbReference>
<dbReference type="PANTHER" id="PTHR22806:SF0">
    <property type="entry name" value="NUCLEOPORIN NUP37"/>
    <property type="match status" value="1"/>
</dbReference>
<dbReference type="PANTHER" id="PTHR22806">
    <property type="entry name" value="NUCLEOPORIN NUP37 P37 -RELATED"/>
    <property type="match status" value="1"/>
</dbReference>
<dbReference type="Pfam" id="PF00400">
    <property type="entry name" value="WD40"/>
    <property type="match status" value="1"/>
</dbReference>
<dbReference type="SMART" id="SM00320">
    <property type="entry name" value="WD40"/>
    <property type="match status" value="3"/>
</dbReference>
<dbReference type="SUPFAM" id="SSF50978">
    <property type="entry name" value="WD40 repeat-like"/>
    <property type="match status" value="1"/>
</dbReference>
<dbReference type="PROSITE" id="PS00678">
    <property type="entry name" value="WD_REPEATS_1"/>
    <property type="match status" value="1"/>
</dbReference>
<dbReference type="PROSITE" id="PS50082">
    <property type="entry name" value="WD_REPEATS_2"/>
    <property type="match status" value="1"/>
</dbReference>
<dbReference type="PROSITE" id="PS50294">
    <property type="entry name" value="WD_REPEATS_REGION"/>
    <property type="match status" value="1"/>
</dbReference>
<organism>
    <name type="scientific">Mus musculus</name>
    <name type="common">Mouse</name>
    <dbReference type="NCBI Taxonomy" id="10090"/>
    <lineage>
        <taxon>Eukaryota</taxon>
        <taxon>Metazoa</taxon>
        <taxon>Chordata</taxon>
        <taxon>Craniata</taxon>
        <taxon>Vertebrata</taxon>
        <taxon>Euteleostomi</taxon>
        <taxon>Mammalia</taxon>
        <taxon>Eutheria</taxon>
        <taxon>Euarchontoglires</taxon>
        <taxon>Glires</taxon>
        <taxon>Rodentia</taxon>
        <taxon>Myomorpha</taxon>
        <taxon>Muroidea</taxon>
        <taxon>Muridae</taxon>
        <taxon>Murinae</taxon>
        <taxon>Mus</taxon>
        <taxon>Mus</taxon>
    </lineage>
</organism>
<comment type="function">
    <text evidence="1">Component of the Nup107-160 subcomplex of the nuclear pore complex (NPC). The Nup107-160 subcomplex is required for the assembly of a functional NPC. The Nup107-160 subcomplex is also required for normal kinetochore microtubule attachment, mitotic progression and chromosome segregation (By similarity).</text>
</comment>
<comment type="subunit">
    <text evidence="1">Component of the Nup107-160 subcomplex of the nuclear pore complex (NPC). The Nup107-160 subcomplex includes NUP160, NUP133, NUP107, NUP98, NUP85, NUP43, NUP37, SEH1 and SEC13 (By similarity).</text>
</comment>
<comment type="subcellular location">
    <subcellularLocation>
        <location evidence="1">Chromosome</location>
        <location evidence="1">Centromere</location>
        <location evidence="1">Kinetochore</location>
    </subcellularLocation>
    <subcellularLocation>
        <location evidence="1">Nucleus</location>
        <location evidence="1">Nuclear pore complex</location>
    </subcellularLocation>
</comment>
<sequence>MKQDATRNAAYTVDCEDYVHVVEFNPFESGDSGNLIAYGGSNYVVVGMCTFQEEETDIEGIQYKTLRTFHHGVRVDGIAWSPETKLDSLPPVIKFCTSAADLKIRLFTSDLQDKNEYKVLEGHSDFINDLVFHPKEGQELASVSDDHTCRIWNLEGKQTAHFLLHSPGMSVCWHPEETFKLMVAEKNGTIRFYDLMAQQAILSLQSEQTPLMSAHWCLKNTFKVGAVAGNDWIIWDITRSSYPQETRPVHMDRAHLFRWSAISENLFATTGYPGKMASQFQIHHLGHSQPVLIGSVAVGSGLSWHRTLPLCAVGGDHKLLFWVTEI</sequence>
<name>NUP37_MOUSE</name>
<feature type="chain" id="PRO_0000051110" description="Nucleoporin Nup37">
    <location>
        <begin position="1"/>
        <end position="326"/>
    </location>
</feature>
<feature type="repeat" description="WD 1">
    <location>
        <begin position="70"/>
        <end position="117"/>
    </location>
</feature>
<feature type="repeat" description="WD 2">
    <location>
        <begin position="122"/>
        <end position="162"/>
    </location>
</feature>
<feature type="repeat" description="WD 3">
    <location>
        <begin position="164"/>
        <end position="203"/>
    </location>
</feature>
<feature type="repeat" description="WD 4">
    <location>
        <begin position="294"/>
        <end position="325"/>
    </location>
</feature>
<feature type="sequence conflict" description="In Ref. 1; BAB26888." evidence="2" ref="1">
    <original>F</original>
    <variation>L</variation>
    <location>
        <position position="27"/>
    </location>
</feature>
<feature type="sequence conflict" description="In Ref. 1; BAB26888." evidence="2" ref="1">
    <original>K</original>
    <variation>R</variation>
    <location>
        <position position="318"/>
    </location>
</feature>
<reference key="1">
    <citation type="journal article" date="2005" name="Science">
        <title>The transcriptional landscape of the mammalian genome.</title>
        <authorList>
            <person name="Carninci P."/>
            <person name="Kasukawa T."/>
            <person name="Katayama S."/>
            <person name="Gough J."/>
            <person name="Frith M.C."/>
            <person name="Maeda N."/>
            <person name="Oyama R."/>
            <person name="Ravasi T."/>
            <person name="Lenhard B."/>
            <person name="Wells C."/>
            <person name="Kodzius R."/>
            <person name="Shimokawa K."/>
            <person name="Bajic V.B."/>
            <person name="Brenner S.E."/>
            <person name="Batalov S."/>
            <person name="Forrest A.R."/>
            <person name="Zavolan M."/>
            <person name="Davis M.J."/>
            <person name="Wilming L.G."/>
            <person name="Aidinis V."/>
            <person name="Allen J.E."/>
            <person name="Ambesi-Impiombato A."/>
            <person name="Apweiler R."/>
            <person name="Aturaliya R.N."/>
            <person name="Bailey T.L."/>
            <person name="Bansal M."/>
            <person name="Baxter L."/>
            <person name="Beisel K.W."/>
            <person name="Bersano T."/>
            <person name="Bono H."/>
            <person name="Chalk A.M."/>
            <person name="Chiu K.P."/>
            <person name="Choudhary V."/>
            <person name="Christoffels A."/>
            <person name="Clutterbuck D.R."/>
            <person name="Crowe M.L."/>
            <person name="Dalla E."/>
            <person name="Dalrymple B.P."/>
            <person name="de Bono B."/>
            <person name="Della Gatta G."/>
            <person name="di Bernardo D."/>
            <person name="Down T."/>
            <person name="Engstrom P."/>
            <person name="Fagiolini M."/>
            <person name="Faulkner G."/>
            <person name="Fletcher C.F."/>
            <person name="Fukushima T."/>
            <person name="Furuno M."/>
            <person name="Futaki S."/>
            <person name="Gariboldi M."/>
            <person name="Georgii-Hemming P."/>
            <person name="Gingeras T.R."/>
            <person name="Gojobori T."/>
            <person name="Green R.E."/>
            <person name="Gustincich S."/>
            <person name="Harbers M."/>
            <person name="Hayashi Y."/>
            <person name="Hensch T.K."/>
            <person name="Hirokawa N."/>
            <person name="Hill D."/>
            <person name="Huminiecki L."/>
            <person name="Iacono M."/>
            <person name="Ikeo K."/>
            <person name="Iwama A."/>
            <person name="Ishikawa T."/>
            <person name="Jakt M."/>
            <person name="Kanapin A."/>
            <person name="Katoh M."/>
            <person name="Kawasawa Y."/>
            <person name="Kelso J."/>
            <person name="Kitamura H."/>
            <person name="Kitano H."/>
            <person name="Kollias G."/>
            <person name="Krishnan S.P."/>
            <person name="Kruger A."/>
            <person name="Kummerfeld S.K."/>
            <person name="Kurochkin I.V."/>
            <person name="Lareau L.F."/>
            <person name="Lazarevic D."/>
            <person name="Lipovich L."/>
            <person name="Liu J."/>
            <person name="Liuni S."/>
            <person name="McWilliam S."/>
            <person name="Madan Babu M."/>
            <person name="Madera M."/>
            <person name="Marchionni L."/>
            <person name="Matsuda H."/>
            <person name="Matsuzawa S."/>
            <person name="Miki H."/>
            <person name="Mignone F."/>
            <person name="Miyake S."/>
            <person name="Morris K."/>
            <person name="Mottagui-Tabar S."/>
            <person name="Mulder N."/>
            <person name="Nakano N."/>
            <person name="Nakauchi H."/>
            <person name="Ng P."/>
            <person name="Nilsson R."/>
            <person name="Nishiguchi S."/>
            <person name="Nishikawa S."/>
            <person name="Nori F."/>
            <person name="Ohara O."/>
            <person name="Okazaki Y."/>
            <person name="Orlando V."/>
            <person name="Pang K.C."/>
            <person name="Pavan W.J."/>
            <person name="Pavesi G."/>
            <person name="Pesole G."/>
            <person name="Petrovsky N."/>
            <person name="Piazza S."/>
            <person name="Reed J."/>
            <person name="Reid J.F."/>
            <person name="Ring B.Z."/>
            <person name="Ringwald M."/>
            <person name="Rost B."/>
            <person name="Ruan Y."/>
            <person name="Salzberg S.L."/>
            <person name="Sandelin A."/>
            <person name="Schneider C."/>
            <person name="Schoenbach C."/>
            <person name="Sekiguchi K."/>
            <person name="Semple C.A."/>
            <person name="Seno S."/>
            <person name="Sessa L."/>
            <person name="Sheng Y."/>
            <person name="Shibata Y."/>
            <person name="Shimada H."/>
            <person name="Shimada K."/>
            <person name="Silva D."/>
            <person name="Sinclair B."/>
            <person name="Sperling S."/>
            <person name="Stupka E."/>
            <person name="Sugiura K."/>
            <person name="Sultana R."/>
            <person name="Takenaka Y."/>
            <person name="Taki K."/>
            <person name="Tammoja K."/>
            <person name="Tan S.L."/>
            <person name="Tang S."/>
            <person name="Taylor M.S."/>
            <person name="Tegner J."/>
            <person name="Teichmann S.A."/>
            <person name="Ueda H.R."/>
            <person name="van Nimwegen E."/>
            <person name="Verardo R."/>
            <person name="Wei C.L."/>
            <person name="Yagi K."/>
            <person name="Yamanishi H."/>
            <person name="Zabarovsky E."/>
            <person name="Zhu S."/>
            <person name="Zimmer A."/>
            <person name="Hide W."/>
            <person name="Bult C."/>
            <person name="Grimmond S.M."/>
            <person name="Teasdale R.D."/>
            <person name="Liu E.T."/>
            <person name="Brusic V."/>
            <person name="Quackenbush J."/>
            <person name="Wahlestedt C."/>
            <person name="Mattick J.S."/>
            <person name="Hume D.A."/>
            <person name="Kai C."/>
            <person name="Sasaki D."/>
            <person name="Tomaru Y."/>
            <person name="Fukuda S."/>
            <person name="Kanamori-Katayama M."/>
            <person name="Suzuki M."/>
            <person name="Aoki J."/>
            <person name="Arakawa T."/>
            <person name="Iida J."/>
            <person name="Imamura K."/>
            <person name="Itoh M."/>
            <person name="Kato T."/>
            <person name="Kawaji H."/>
            <person name="Kawagashira N."/>
            <person name="Kawashima T."/>
            <person name="Kojima M."/>
            <person name="Kondo S."/>
            <person name="Konno H."/>
            <person name="Nakano K."/>
            <person name="Ninomiya N."/>
            <person name="Nishio T."/>
            <person name="Okada M."/>
            <person name="Plessy C."/>
            <person name="Shibata K."/>
            <person name="Shiraki T."/>
            <person name="Suzuki S."/>
            <person name="Tagami M."/>
            <person name="Waki K."/>
            <person name="Watahiki A."/>
            <person name="Okamura-Oho Y."/>
            <person name="Suzuki H."/>
            <person name="Kawai J."/>
            <person name="Hayashizaki Y."/>
        </authorList>
    </citation>
    <scope>NUCLEOTIDE SEQUENCE [LARGE SCALE MRNA]</scope>
    <source>
        <strain>C57BL/6J</strain>
        <tissue>Embryonic stem cell</tissue>
        <tissue>Thymus</tissue>
    </source>
</reference>
<reference key="2">
    <citation type="submission" date="2005-07" db="EMBL/GenBank/DDBJ databases">
        <authorList>
            <person name="Mural R.J."/>
            <person name="Adams M.D."/>
            <person name="Myers E.W."/>
            <person name="Smith H.O."/>
            <person name="Venter J.C."/>
        </authorList>
    </citation>
    <scope>NUCLEOTIDE SEQUENCE [LARGE SCALE GENOMIC DNA]</scope>
</reference>
<reference key="3">
    <citation type="journal article" date="2004" name="Genome Res.">
        <title>The status, quality, and expansion of the NIH full-length cDNA project: the Mammalian Gene Collection (MGC).</title>
        <authorList>
            <consortium name="The MGC Project Team"/>
        </authorList>
    </citation>
    <scope>NUCLEOTIDE SEQUENCE [LARGE SCALE MRNA]</scope>
    <source>
        <strain>Czech II</strain>
        <tissue>Mammary tumor</tissue>
    </source>
</reference>
<reference key="4">
    <citation type="journal article" date="2010" name="Cell">
        <title>A tissue-specific atlas of mouse protein phosphorylation and expression.</title>
        <authorList>
            <person name="Huttlin E.L."/>
            <person name="Jedrychowski M.P."/>
            <person name="Elias J.E."/>
            <person name="Goswami T."/>
            <person name="Rad R."/>
            <person name="Beausoleil S.A."/>
            <person name="Villen J."/>
            <person name="Haas W."/>
            <person name="Sowa M.E."/>
            <person name="Gygi S.P."/>
        </authorList>
    </citation>
    <scope>IDENTIFICATION BY MASS SPECTROMETRY [LARGE SCALE ANALYSIS]</scope>
    <source>
        <tissue>Spleen</tissue>
        <tissue>Testis</tissue>
    </source>
</reference>
<proteinExistence type="evidence at protein level"/>
<keyword id="KW-0131">Cell cycle</keyword>
<keyword id="KW-0132">Cell division</keyword>
<keyword id="KW-0137">Centromere</keyword>
<keyword id="KW-0158">Chromosome</keyword>
<keyword id="KW-0159">Chromosome partition</keyword>
<keyword id="KW-0995">Kinetochore</keyword>
<keyword id="KW-0498">Mitosis</keyword>
<keyword id="KW-0509">mRNA transport</keyword>
<keyword id="KW-0906">Nuclear pore complex</keyword>
<keyword id="KW-0539">Nucleus</keyword>
<keyword id="KW-0653">Protein transport</keyword>
<keyword id="KW-1185">Reference proteome</keyword>
<keyword id="KW-0677">Repeat</keyword>
<keyword id="KW-0811">Translocation</keyword>
<keyword id="KW-0813">Transport</keyword>
<keyword id="KW-0853">WD repeat</keyword>
<protein>
    <recommendedName>
        <fullName>Nucleoporin Nup37</fullName>
    </recommendedName>
    <alternativeName>
        <fullName>Nup107-160 subcomplex subunit Nup37</fullName>
    </alternativeName>
</protein>